<name>EFP_STAAB</name>
<protein>
    <recommendedName>
        <fullName evidence="1">Elongation factor P</fullName>
        <shortName evidence="1">EF-P</shortName>
    </recommendedName>
</protein>
<gene>
    <name evidence="1" type="primary">efp</name>
    <name type="ordered locus">SAB1401c</name>
</gene>
<proteinExistence type="inferred from homology"/>
<evidence type="ECO:0000255" key="1">
    <source>
        <dbReference type="HAMAP-Rule" id="MF_00141"/>
    </source>
</evidence>
<sequence length="185" mass="20554">MISVNDFKTGLTISVDNAIWKVIDFQHVKPGKGSAFVRSKLRNLRTGAIQEKTFRAGEKVEPAMIENRRMQYLYADGDNHVFMDNESFEQTELSSDYLKEELNYLKEGMEVQIQTYEGETIGVELPKTVELTVTETEPGIKGDTATGATKSATVETGYTLNVPLFVNEGDVLIINTGDGSYISRG</sequence>
<dbReference type="EMBL" id="AJ938182">
    <property type="protein sequence ID" value="CAI81090.1"/>
    <property type="molecule type" value="Genomic_DNA"/>
</dbReference>
<dbReference type="RefSeq" id="WP_000626504.1">
    <property type="nucleotide sequence ID" value="NC_007622.1"/>
</dbReference>
<dbReference type="SMR" id="Q2YT00"/>
<dbReference type="KEGG" id="sab:SAB1401c"/>
<dbReference type="HOGENOM" id="CLU_074944_0_1_9"/>
<dbReference type="UniPathway" id="UPA00345"/>
<dbReference type="GO" id="GO:0005737">
    <property type="term" value="C:cytoplasm"/>
    <property type="evidence" value="ECO:0007669"/>
    <property type="project" value="UniProtKB-SubCell"/>
</dbReference>
<dbReference type="GO" id="GO:0003746">
    <property type="term" value="F:translation elongation factor activity"/>
    <property type="evidence" value="ECO:0007669"/>
    <property type="project" value="UniProtKB-UniRule"/>
</dbReference>
<dbReference type="GO" id="GO:0043043">
    <property type="term" value="P:peptide biosynthetic process"/>
    <property type="evidence" value="ECO:0007669"/>
    <property type="project" value="InterPro"/>
</dbReference>
<dbReference type="CDD" id="cd04470">
    <property type="entry name" value="S1_EF-P_repeat_1"/>
    <property type="match status" value="1"/>
</dbReference>
<dbReference type="CDD" id="cd05794">
    <property type="entry name" value="S1_EF-P_repeat_2"/>
    <property type="match status" value="1"/>
</dbReference>
<dbReference type="FunFam" id="2.30.30.30:FF:000010">
    <property type="entry name" value="Elongation factor P"/>
    <property type="match status" value="1"/>
</dbReference>
<dbReference type="FunFam" id="2.40.50.140:FF:000004">
    <property type="entry name" value="Elongation factor P"/>
    <property type="match status" value="1"/>
</dbReference>
<dbReference type="FunFam" id="2.40.50.140:FF:000009">
    <property type="entry name" value="Elongation factor P"/>
    <property type="match status" value="1"/>
</dbReference>
<dbReference type="Gene3D" id="2.30.30.30">
    <property type="match status" value="1"/>
</dbReference>
<dbReference type="Gene3D" id="2.40.50.140">
    <property type="entry name" value="Nucleic acid-binding proteins"/>
    <property type="match status" value="2"/>
</dbReference>
<dbReference type="HAMAP" id="MF_00141">
    <property type="entry name" value="EF_P"/>
    <property type="match status" value="1"/>
</dbReference>
<dbReference type="InterPro" id="IPR015365">
    <property type="entry name" value="Elong-fact-P_C"/>
</dbReference>
<dbReference type="InterPro" id="IPR012340">
    <property type="entry name" value="NA-bd_OB-fold"/>
</dbReference>
<dbReference type="InterPro" id="IPR014722">
    <property type="entry name" value="Rib_uL2_dom2"/>
</dbReference>
<dbReference type="InterPro" id="IPR020599">
    <property type="entry name" value="Transl_elong_fac_P/YeiP"/>
</dbReference>
<dbReference type="InterPro" id="IPR013185">
    <property type="entry name" value="Transl_elong_KOW-like"/>
</dbReference>
<dbReference type="InterPro" id="IPR001059">
    <property type="entry name" value="Transl_elong_P/YeiP_cen"/>
</dbReference>
<dbReference type="InterPro" id="IPR013852">
    <property type="entry name" value="Transl_elong_P/YeiP_CS"/>
</dbReference>
<dbReference type="InterPro" id="IPR011768">
    <property type="entry name" value="Transl_elongation_fac_P"/>
</dbReference>
<dbReference type="InterPro" id="IPR008991">
    <property type="entry name" value="Translation_prot_SH3-like_sf"/>
</dbReference>
<dbReference type="NCBIfam" id="TIGR00038">
    <property type="entry name" value="efp"/>
    <property type="match status" value="1"/>
</dbReference>
<dbReference type="NCBIfam" id="NF001810">
    <property type="entry name" value="PRK00529.1"/>
    <property type="match status" value="1"/>
</dbReference>
<dbReference type="PANTHER" id="PTHR30053">
    <property type="entry name" value="ELONGATION FACTOR P"/>
    <property type="match status" value="1"/>
</dbReference>
<dbReference type="PANTHER" id="PTHR30053:SF12">
    <property type="entry name" value="ELONGATION FACTOR P (EF-P) FAMILY PROTEIN"/>
    <property type="match status" value="1"/>
</dbReference>
<dbReference type="Pfam" id="PF01132">
    <property type="entry name" value="EFP"/>
    <property type="match status" value="1"/>
</dbReference>
<dbReference type="Pfam" id="PF08207">
    <property type="entry name" value="EFP_N"/>
    <property type="match status" value="1"/>
</dbReference>
<dbReference type="Pfam" id="PF09285">
    <property type="entry name" value="Elong-fact-P_C"/>
    <property type="match status" value="1"/>
</dbReference>
<dbReference type="PIRSF" id="PIRSF005901">
    <property type="entry name" value="EF-P"/>
    <property type="match status" value="1"/>
</dbReference>
<dbReference type="SMART" id="SM01185">
    <property type="entry name" value="EFP"/>
    <property type="match status" value="1"/>
</dbReference>
<dbReference type="SMART" id="SM00841">
    <property type="entry name" value="Elong-fact-P_C"/>
    <property type="match status" value="1"/>
</dbReference>
<dbReference type="SUPFAM" id="SSF50249">
    <property type="entry name" value="Nucleic acid-binding proteins"/>
    <property type="match status" value="2"/>
</dbReference>
<dbReference type="SUPFAM" id="SSF50104">
    <property type="entry name" value="Translation proteins SH3-like domain"/>
    <property type="match status" value="1"/>
</dbReference>
<dbReference type="PROSITE" id="PS01275">
    <property type="entry name" value="EFP"/>
    <property type="match status" value="1"/>
</dbReference>
<reference key="1">
    <citation type="journal article" date="2007" name="PLoS ONE">
        <title>Molecular correlates of host specialization in Staphylococcus aureus.</title>
        <authorList>
            <person name="Herron-Olson L."/>
            <person name="Fitzgerald J.R."/>
            <person name="Musser J.M."/>
            <person name="Kapur V."/>
        </authorList>
    </citation>
    <scope>NUCLEOTIDE SEQUENCE [LARGE SCALE GENOMIC DNA]</scope>
    <source>
        <strain>bovine RF122 / ET3-1</strain>
    </source>
</reference>
<accession>Q2YT00</accession>
<comment type="function">
    <text evidence="1">Involved in peptide bond synthesis. Stimulates efficient translation and peptide-bond synthesis on native or reconstituted 70S ribosomes in vitro. Probably functions indirectly by altering the affinity of the ribosome for aminoacyl-tRNA, thus increasing their reactivity as acceptors for peptidyl transferase.</text>
</comment>
<comment type="pathway">
    <text evidence="1">Protein biosynthesis; polypeptide chain elongation.</text>
</comment>
<comment type="subcellular location">
    <subcellularLocation>
        <location evidence="1">Cytoplasm</location>
    </subcellularLocation>
</comment>
<comment type="similarity">
    <text evidence="1">Belongs to the elongation factor P family.</text>
</comment>
<keyword id="KW-0963">Cytoplasm</keyword>
<keyword id="KW-0251">Elongation factor</keyword>
<keyword id="KW-0648">Protein biosynthesis</keyword>
<feature type="chain" id="PRO_1000010867" description="Elongation factor P">
    <location>
        <begin position="1"/>
        <end position="185"/>
    </location>
</feature>
<organism>
    <name type="scientific">Staphylococcus aureus (strain bovine RF122 / ET3-1)</name>
    <dbReference type="NCBI Taxonomy" id="273036"/>
    <lineage>
        <taxon>Bacteria</taxon>
        <taxon>Bacillati</taxon>
        <taxon>Bacillota</taxon>
        <taxon>Bacilli</taxon>
        <taxon>Bacillales</taxon>
        <taxon>Staphylococcaceae</taxon>
        <taxon>Staphylococcus</taxon>
    </lineage>
</organism>